<keyword id="KW-1185">Reference proteome</keyword>
<keyword id="KW-0687">Ribonucleoprotein</keyword>
<keyword id="KW-0689">Ribosomal protein</keyword>
<keyword id="KW-0694">RNA-binding</keyword>
<keyword id="KW-0699">rRNA-binding</keyword>
<sequence length="215" mass="23873">MDVEIYQEDGVESGETAALDPTVFDIEPNDHIIWLDVKRIQAHQRQGTSKTKERGEVRGSGRKLYRQKGTGNARVGDAQSPIRRGGGRAHGARPRDYAHDLNQKEKRLARRSALSYKAANDNIQVIENFSLDRPDTRGLTDLFELLGVEGQDILLATAEVEREVYLSSQNLPDVNVQEVQSINTVDILDADVVLLQEGALDWLTDVLSTDEAVPA</sequence>
<comment type="function">
    <text evidence="1">One of the primary rRNA binding proteins, this protein initially binds near the 5'-end of the 23S rRNA. It is important during the early stages of 50S assembly. It makes multiple contacts with different domains of the 23S rRNA in the assembled 50S subunit and ribosome.</text>
</comment>
<comment type="function">
    <text evidence="1">Forms part of the polypeptide exit tunnel.</text>
</comment>
<comment type="subunit">
    <text evidence="1">Part of the 50S ribosomal subunit.</text>
</comment>
<comment type="similarity">
    <text evidence="1">Belongs to the universal ribosomal protein uL4 family.</text>
</comment>
<reference key="1">
    <citation type="journal article" date="2005" name="Proc. Natl. Acad. Sci. U.S.A.">
        <title>The genome of Salinibacter ruber: convergence and gene exchange among hyperhalophilic bacteria and archaea.</title>
        <authorList>
            <person name="Mongodin E.F."/>
            <person name="Nelson K.E."/>
            <person name="Daugherty S."/>
            <person name="DeBoy R.T."/>
            <person name="Wister J."/>
            <person name="Khouri H."/>
            <person name="Weidman J."/>
            <person name="Walsh D.A."/>
            <person name="Papke R.T."/>
            <person name="Sanchez Perez G."/>
            <person name="Sharma A.K."/>
            <person name="Nesbo C.L."/>
            <person name="MacLeod D."/>
            <person name="Bapteste E."/>
            <person name="Doolittle W.F."/>
            <person name="Charlebois R.L."/>
            <person name="Legault B."/>
            <person name="Rodriguez-Valera F."/>
        </authorList>
    </citation>
    <scope>NUCLEOTIDE SEQUENCE [LARGE SCALE GENOMIC DNA]</scope>
    <source>
        <strain>DSM 13855 / CECT 5946 / M31</strain>
    </source>
</reference>
<feature type="chain" id="PRO_0000242433" description="Large ribosomal subunit protein uL4">
    <location>
        <begin position="1"/>
        <end position="215"/>
    </location>
</feature>
<feature type="region of interest" description="Disordered" evidence="2">
    <location>
        <begin position="43"/>
        <end position="101"/>
    </location>
</feature>
<feature type="compositionally biased region" description="Basic and acidic residues" evidence="2">
    <location>
        <begin position="50"/>
        <end position="59"/>
    </location>
</feature>
<accession>Q2S3R3</accession>
<proteinExistence type="inferred from homology"/>
<gene>
    <name evidence="1" type="primary">rplD</name>
    <name type="ordered locus">SRU_1036</name>
</gene>
<name>RL4_SALRD</name>
<protein>
    <recommendedName>
        <fullName evidence="1">Large ribosomal subunit protein uL4</fullName>
    </recommendedName>
    <alternativeName>
        <fullName evidence="3">50S ribosomal protein L4</fullName>
    </alternativeName>
</protein>
<dbReference type="EMBL" id="CP000159">
    <property type="protein sequence ID" value="ABC44078.1"/>
    <property type="molecule type" value="Genomic_DNA"/>
</dbReference>
<dbReference type="RefSeq" id="WP_011403796.1">
    <property type="nucleotide sequence ID" value="NC_007677.1"/>
</dbReference>
<dbReference type="RefSeq" id="YP_445168.1">
    <property type="nucleotide sequence ID" value="NC_007677.1"/>
</dbReference>
<dbReference type="SMR" id="Q2S3R3"/>
<dbReference type="STRING" id="309807.SRU_1036"/>
<dbReference type="EnsemblBacteria" id="ABC44078">
    <property type="protein sequence ID" value="ABC44078"/>
    <property type="gene ID" value="SRU_1036"/>
</dbReference>
<dbReference type="GeneID" id="83727965"/>
<dbReference type="KEGG" id="sru:SRU_1036"/>
<dbReference type="PATRIC" id="fig|309807.25.peg.1074"/>
<dbReference type="eggNOG" id="COG0088">
    <property type="taxonomic scope" value="Bacteria"/>
</dbReference>
<dbReference type="HOGENOM" id="CLU_041575_5_2_10"/>
<dbReference type="OrthoDB" id="9803201at2"/>
<dbReference type="Proteomes" id="UP000008674">
    <property type="component" value="Chromosome"/>
</dbReference>
<dbReference type="GO" id="GO:1990904">
    <property type="term" value="C:ribonucleoprotein complex"/>
    <property type="evidence" value="ECO:0007669"/>
    <property type="project" value="UniProtKB-KW"/>
</dbReference>
<dbReference type="GO" id="GO:0005840">
    <property type="term" value="C:ribosome"/>
    <property type="evidence" value="ECO:0007669"/>
    <property type="project" value="UniProtKB-KW"/>
</dbReference>
<dbReference type="GO" id="GO:0019843">
    <property type="term" value="F:rRNA binding"/>
    <property type="evidence" value="ECO:0007669"/>
    <property type="project" value="UniProtKB-UniRule"/>
</dbReference>
<dbReference type="GO" id="GO:0003735">
    <property type="term" value="F:structural constituent of ribosome"/>
    <property type="evidence" value="ECO:0007669"/>
    <property type="project" value="InterPro"/>
</dbReference>
<dbReference type="GO" id="GO:0006412">
    <property type="term" value="P:translation"/>
    <property type="evidence" value="ECO:0007669"/>
    <property type="project" value="UniProtKB-UniRule"/>
</dbReference>
<dbReference type="Gene3D" id="3.40.1370.10">
    <property type="match status" value="1"/>
</dbReference>
<dbReference type="HAMAP" id="MF_01328_B">
    <property type="entry name" value="Ribosomal_uL4_B"/>
    <property type="match status" value="1"/>
</dbReference>
<dbReference type="InterPro" id="IPR002136">
    <property type="entry name" value="Ribosomal_uL4"/>
</dbReference>
<dbReference type="InterPro" id="IPR013005">
    <property type="entry name" value="Ribosomal_uL4-like"/>
</dbReference>
<dbReference type="InterPro" id="IPR023574">
    <property type="entry name" value="Ribosomal_uL4_dom_sf"/>
</dbReference>
<dbReference type="NCBIfam" id="TIGR03953">
    <property type="entry name" value="rplD_bact"/>
    <property type="match status" value="1"/>
</dbReference>
<dbReference type="PANTHER" id="PTHR10746">
    <property type="entry name" value="50S RIBOSOMAL PROTEIN L4"/>
    <property type="match status" value="1"/>
</dbReference>
<dbReference type="PANTHER" id="PTHR10746:SF6">
    <property type="entry name" value="LARGE RIBOSOMAL SUBUNIT PROTEIN UL4M"/>
    <property type="match status" value="1"/>
</dbReference>
<dbReference type="Pfam" id="PF00573">
    <property type="entry name" value="Ribosomal_L4"/>
    <property type="match status" value="1"/>
</dbReference>
<dbReference type="SUPFAM" id="SSF52166">
    <property type="entry name" value="Ribosomal protein L4"/>
    <property type="match status" value="1"/>
</dbReference>
<evidence type="ECO:0000255" key="1">
    <source>
        <dbReference type="HAMAP-Rule" id="MF_01328"/>
    </source>
</evidence>
<evidence type="ECO:0000256" key="2">
    <source>
        <dbReference type="SAM" id="MobiDB-lite"/>
    </source>
</evidence>
<evidence type="ECO:0000305" key="3"/>
<organism>
    <name type="scientific">Salinibacter ruber (strain DSM 13855 / M31)</name>
    <dbReference type="NCBI Taxonomy" id="309807"/>
    <lineage>
        <taxon>Bacteria</taxon>
        <taxon>Pseudomonadati</taxon>
        <taxon>Rhodothermota</taxon>
        <taxon>Rhodothermia</taxon>
        <taxon>Rhodothermales</taxon>
        <taxon>Salinibacteraceae</taxon>
        <taxon>Salinibacter</taxon>
    </lineage>
</organism>